<keyword id="KW-0963">Cytoplasm</keyword>
<keyword id="KW-0378">Hydrolase</keyword>
<keyword id="KW-0540">Nuclease</keyword>
<keyword id="KW-0690">Ribosome biogenesis</keyword>
<protein>
    <recommendedName>
        <fullName evidence="1">Putative pre-16S rRNA nuclease</fullName>
        <ecNumber evidence="1">3.1.-.-</ecNumber>
    </recommendedName>
</protein>
<gene>
    <name type="ordered locus">PPA1179</name>
</gene>
<reference key="1">
    <citation type="journal article" date="2004" name="Science">
        <title>The complete genome sequence of Propionibacterium acnes, a commensal of human skin.</title>
        <authorList>
            <person name="Brueggemann H."/>
            <person name="Henne A."/>
            <person name="Hoster F."/>
            <person name="Liesegang H."/>
            <person name="Wiezer A."/>
            <person name="Strittmatter A."/>
            <person name="Hujer S."/>
            <person name="Duerre P."/>
            <person name="Gottschalk G."/>
        </authorList>
    </citation>
    <scope>NUCLEOTIDE SEQUENCE [LARGE SCALE GENOMIC DNA]</scope>
    <source>
        <strain>DSM 16379 / KPA171202</strain>
    </source>
</reference>
<organism>
    <name type="scientific">Cutibacterium acnes (strain DSM 16379 / KPA171202)</name>
    <name type="common">Propionibacterium acnes</name>
    <dbReference type="NCBI Taxonomy" id="267747"/>
    <lineage>
        <taxon>Bacteria</taxon>
        <taxon>Bacillati</taxon>
        <taxon>Actinomycetota</taxon>
        <taxon>Actinomycetes</taxon>
        <taxon>Propionibacteriales</taxon>
        <taxon>Propionibacteriaceae</taxon>
        <taxon>Cutibacterium</taxon>
    </lineage>
</organism>
<evidence type="ECO:0000255" key="1">
    <source>
        <dbReference type="HAMAP-Rule" id="MF_00651"/>
    </source>
</evidence>
<proteinExistence type="inferred from homology"/>
<sequence length="160" mass="17250">MNPAERPDTSLCGVRLAIDWGKARIGVAASDRDAILAFPVETVHTADRPVQRLAEIVAEYEPVEVIMGLPVALNGTEQLAAQDVRDAGRQLTEAINPIPVRWVDERMTTRTAARALHEAGRNARKQRGVIDQAAAVAILEHVLEQVRLGQSETATGGADS</sequence>
<dbReference type="EC" id="3.1.-.-" evidence="1"/>
<dbReference type="EMBL" id="AE017283">
    <property type="protein sequence ID" value="AAT82928.1"/>
    <property type="molecule type" value="Genomic_DNA"/>
</dbReference>
<dbReference type="SMR" id="Q6A8I7"/>
<dbReference type="EnsemblBacteria" id="AAT82928">
    <property type="protein sequence ID" value="AAT82928"/>
    <property type="gene ID" value="PPA1179"/>
</dbReference>
<dbReference type="KEGG" id="pac:PPA1179"/>
<dbReference type="PATRIC" id="fig|267747.3.peg.1215"/>
<dbReference type="eggNOG" id="COG0816">
    <property type="taxonomic scope" value="Bacteria"/>
</dbReference>
<dbReference type="HOGENOM" id="CLU_098240_0_0_11"/>
<dbReference type="Proteomes" id="UP000000603">
    <property type="component" value="Chromosome"/>
</dbReference>
<dbReference type="GO" id="GO:0005829">
    <property type="term" value="C:cytosol"/>
    <property type="evidence" value="ECO:0007669"/>
    <property type="project" value="TreeGrafter"/>
</dbReference>
<dbReference type="GO" id="GO:0004518">
    <property type="term" value="F:nuclease activity"/>
    <property type="evidence" value="ECO:0007669"/>
    <property type="project" value="UniProtKB-KW"/>
</dbReference>
<dbReference type="GO" id="GO:0000967">
    <property type="term" value="P:rRNA 5'-end processing"/>
    <property type="evidence" value="ECO:0007669"/>
    <property type="project" value="UniProtKB-UniRule"/>
</dbReference>
<dbReference type="CDD" id="cd16964">
    <property type="entry name" value="YqgF"/>
    <property type="match status" value="1"/>
</dbReference>
<dbReference type="Gene3D" id="3.30.420.140">
    <property type="entry name" value="YqgF/RNase H-like domain"/>
    <property type="match status" value="1"/>
</dbReference>
<dbReference type="HAMAP" id="MF_00651">
    <property type="entry name" value="Nuclease_YqgF"/>
    <property type="match status" value="1"/>
</dbReference>
<dbReference type="InterPro" id="IPR012337">
    <property type="entry name" value="RNaseH-like_sf"/>
</dbReference>
<dbReference type="InterPro" id="IPR005227">
    <property type="entry name" value="YqgF"/>
</dbReference>
<dbReference type="InterPro" id="IPR006641">
    <property type="entry name" value="YqgF/RNaseH-like_dom"/>
</dbReference>
<dbReference type="InterPro" id="IPR037027">
    <property type="entry name" value="YqgF/RNaseH-like_dom_sf"/>
</dbReference>
<dbReference type="NCBIfam" id="TIGR00250">
    <property type="entry name" value="RNAse_H_YqgF"/>
    <property type="match status" value="1"/>
</dbReference>
<dbReference type="PANTHER" id="PTHR33317">
    <property type="entry name" value="POLYNUCLEOTIDYL TRANSFERASE, RIBONUCLEASE H-LIKE SUPERFAMILY PROTEIN"/>
    <property type="match status" value="1"/>
</dbReference>
<dbReference type="PANTHER" id="PTHR33317:SF4">
    <property type="entry name" value="POLYNUCLEOTIDYL TRANSFERASE, RIBONUCLEASE H-LIKE SUPERFAMILY PROTEIN"/>
    <property type="match status" value="1"/>
</dbReference>
<dbReference type="Pfam" id="PF03652">
    <property type="entry name" value="RuvX"/>
    <property type="match status" value="1"/>
</dbReference>
<dbReference type="SMART" id="SM00732">
    <property type="entry name" value="YqgFc"/>
    <property type="match status" value="1"/>
</dbReference>
<dbReference type="SUPFAM" id="SSF53098">
    <property type="entry name" value="Ribonuclease H-like"/>
    <property type="match status" value="1"/>
</dbReference>
<feature type="chain" id="PRO_0000172114" description="Putative pre-16S rRNA nuclease">
    <location>
        <begin position="1"/>
        <end position="160"/>
    </location>
</feature>
<name>YQGF_CUTAK</name>
<comment type="function">
    <text evidence="1">Could be a nuclease involved in processing of the 5'-end of pre-16S rRNA.</text>
</comment>
<comment type="subcellular location">
    <subcellularLocation>
        <location evidence="1">Cytoplasm</location>
    </subcellularLocation>
</comment>
<comment type="similarity">
    <text evidence="1">Belongs to the YqgF nuclease family.</text>
</comment>
<accession>Q6A8I7</accession>